<name>METN2_SALTI</name>
<protein>
    <recommendedName>
        <fullName evidence="1">Methionine import ATP-binding protein MetN 2</fullName>
        <ecNumber evidence="1">7.4.2.11</ecNumber>
    </recommendedName>
</protein>
<organism>
    <name type="scientific">Salmonella typhi</name>
    <dbReference type="NCBI Taxonomy" id="90370"/>
    <lineage>
        <taxon>Bacteria</taxon>
        <taxon>Pseudomonadati</taxon>
        <taxon>Pseudomonadota</taxon>
        <taxon>Gammaproteobacteria</taxon>
        <taxon>Enterobacterales</taxon>
        <taxon>Enterobacteriaceae</taxon>
        <taxon>Salmonella</taxon>
    </lineage>
</organism>
<proteinExistence type="inferred from homology"/>
<feature type="chain" id="PRO_0000270380" description="Methionine import ATP-binding protein MetN 2">
    <location>
        <begin position="1"/>
        <end position="338"/>
    </location>
</feature>
<feature type="domain" description="ABC transporter" evidence="1">
    <location>
        <begin position="2"/>
        <end position="242"/>
    </location>
</feature>
<feature type="binding site" evidence="1">
    <location>
        <begin position="39"/>
        <end position="46"/>
    </location>
    <ligand>
        <name>ATP</name>
        <dbReference type="ChEBI" id="CHEBI:30616"/>
    </ligand>
</feature>
<sequence>MIEIEKVCVDFTAGRGTPTRAVDDVSLHIAAGEIFGIVGTSGAGKSTLLRTLNALTRPSQGRVNVNGVEISALDGKALRQARQRIGMIFQHFNLMHTRTVAKNVAFSLKAAGWERSKIAPRVAEILTLVGLADKANCFPVQLSGGQKQRVGIARAIANHPDVLLCDEPTSALDLETSATILALLRQINAQLGITIVLITHEMNVIKSICDRVAVMSGGKVVESGEVFDVFAHPQHAFTQQLVSHTLNLTLPERLREHLPGQLLKILFIGDSAEQPVLSEVAIKFGVAVNILHGKIEYIGERALGILVVQLTAPHNPTAVAAAVEHIRQRTAQVEVIRG</sequence>
<keyword id="KW-0029">Amino-acid transport</keyword>
<keyword id="KW-0067">ATP-binding</keyword>
<keyword id="KW-0997">Cell inner membrane</keyword>
<keyword id="KW-1003">Cell membrane</keyword>
<keyword id="KW-0472">Membrane</keyword>
<keyword id="KW-0547">Nucleotide-binding</keyword>
<keyword id="KW-1278">Translocase</keyword>
<keyword id="KW-0813">Transport</keyword>
<evidence type="ECO:0000255" key="1">
    <source>
        <dbReference type="HAMAP-Rule" id="MF_01719"/>
    </source>
</evidence>
<gene>
    <name evidence="1" type="primary">metN2</name>
    <name type="ordered locus">STY0559</name>
    <name type="ordered locus">t2349</name>
</gene>
<reference key="1">
    <citation type="journal article" date="2001" name="Nature">
        <title>Complete genome sequence of a multiple drug resistant Salmonella enterica serovar Typhi CT18.</title>
        <authorList>
            <person name="Parkhill J."/>
            <person name="Dougan G."/>
            <person name="James K.D."/>
            <person name="Thomson N.R."/>
            <person name="Pickard D."/>
            <person name="Wain J."/>
            <person name="Churcher C.M."/>
            <person name="Mungall K.L."/>
            <person name="Bentley S.D."/>
            <person name="Holden M.T.G."/>
            <person name="Sebaihia M."/>
            <person name="Baker S."/>
            <person name="Basham D."/>
            <person name="Brooks K."/>
            <person name="Chillingworth T."/>
            <person name="Connerton P."/>
            <person name="Cronin A."/>
            <person name="Davis P."/>
            <person name="Davies R.M."/>
            <person name="Dowd L."/>
            <person name="White N."/>
            <person name="Farrar J."/>
            <person name="Feltwell T."/>
            <person name="Hamlin N."/>
            <person name="Haque A."/>
            <person name="Hien T.T."/>
            <person name="Holroyd S."/>
            <person name="Jagels K."/>
            <person name="Krogh A."/>
            <person name="Larsen T.S."/>
            <person name="Leather S."/>
            <person name="Moule S."/>
            <person name="O'Gaora P."/>
            <person name="Parry C."/>
            <person name="Quail M.A."/>
            <person name="Rutherford K.M."/>
            <person name="Simmonds M."/>
            <person name="Skelton J."/>
            <person name="Stevens K."/>
            <person name="Whitehead S."/>
            <person name="Barrell B.G."/>
        </authorList>
    </citation>
    <scope>NUCLEOTIDE SEQUENCE [LARGE SCALE GENOMIC DNA]</scope>
    <source>
        <strain>CT18</strain>
    </source>
</reference>
<reference key="2">
    <citation type="journal article" date="2003" name="J. Bacteriol.">
        <title>Comparative genomics of Salmonella enterica serovar Typhi strains Ty2 and CT18.</title>
        <authorList>
            <person name="Deng W."/>
            <person name="Liou S.-R."/>
            <person name="Plunkett G. III"/>
            <person name="Mayhew G.F."/>
            <person name="Rose D.J."/>
            <person name="Burland V."/>
            <person name="Kodoyianni V."/>
            <person name="Schwartz D.C."/>
            <person name="Blattner F.R."/>
        </authorList>
    </citation>
    <scope>NUCLEOTIDE SEQUENCE [LARGE SCALE GENOMIC DNA]</scope>
    <source>
        <strain>ATCC 700931 / Ty2</strain>
    </source>
</reference>
<dbReference type="EC" id="7.4.2.11" evidence="1"/>
<dbReference type="EMBL" id="AL513382">
    <property type="protein sequence ID" value="CAD04996.1"/>
    <property type="molecule type" value="Genomic_DNA"/>
</dbReference>
<dbReference type="EMBL" id="AE014613">
    <property type="protein sequence ID" value="AAO69941.1"/>
    <property type="molecule type" value="Genomic_DNA"/>
</dbReference>
<dbReference type="RefSeq" id="NP_455106.1">
    <property type="nucleotide sequence ID" value="NC_003198.1"/>
</dbReference>
<dbReference type="SMR" id="Q8Z8R5"/>
<dbReference type="STRING" id="220341.gene:17584576"/>
<dbReference type="KEGG" id="stt:t2349"/>
<dbReference type="KEGG" id="sty:STY0559"/>
<dbReference type="PATRIC" id="fig|220341.7.peg.560"/>
<dbReference type="eggNOG" id="COG1135">
    <property type="taxonomic scope" value="Bacteria"/>
</dbReference>
<dbReference type="HOGENOM" id="CLU_000604_1_3_6"/>
<dbReference type="OMA" id="VIRKICH"/>
<dbReference type="OrthoDB" id="9802264at2"/>
<dbReference type="Proteomes" id="UP000000541">
    <property type="component" value="Chromosome"/>
</dbReference>
<dbReference type="Proteomes" id="UP000002670">
    <property type="component" value="Chromosome"/>
</dbReference>
<dbReference type="GO" id="GO:0005886">
    <property type="term" value="C:plasma membrane"/>
    <property type="evidence" value="ECO:0007669"/>
    <property type="project" value="UniProtKB-SubCell"/>
</dbReference>
<dbReference type="GO" id="GO:0033232">
    <property type="term" value="F:ABC-type D-methionine transporter activity"/>
    <property type="evidence" value="ECO:0007669"/>
    <property type="project" value="UniProtKB-EC"/>
</dbReference>
<dbReference type="GO" id="GO:0005524">
    <property type="term" value="F:ATP binding"/>
    <property type="evidence" value="ECO:0007669"/>
    <property type="project" value="UniProtKB-KW"/>
</dbReference>
<dbReference type="GO" id="GO:0016887">
    <property type="term" value="F:ATP hydrolysis activity"/>
    <property type="evidence" value="ECO:0007669"/>
    <property type="project" value="InterPro"/>
</dbReference>
<dbReference type="CDD" id="cd03258">
    <property type="entry name" value="ABC_MetN_methionine_transporter"/>
    <property type="match status" value="1"/>
</dbReference>
<dbReference type="FunFam" id="3.40.50.300:FF:000056">
    <property type="entry name" value="Cell division ATP-binding protein FtsE"/>
    <property type="match status" value="1"/>
</dbReference>
<dbReference type="Gene3D" id="3.30.70.260">
    <property type="match status" value="1"/>
</dbReference>
<dbReference type="Gene3D" id="3.40.50.300">
    <property type="entry name" value="P-loop containing nucleotide triphosphate hydrolases"/>
    <property type="match status" value="1"/>
</dbReference>
<dbReference type="InterPro" id="IPR003593">
    <property type="entry name" value="AAA+_ATPase"/>
</dbReference>
<dbReference type="InterPro" id="IPR003439">
    <property type="entry name" value="ABC_transporter-like_ATP-bd"/>
</dbReference>
<dbReference type="InterPro" id="IPR017871">
    <property type="entry name" value="ABC_transporter-like_CS"/>
</dbReference>
<dbReference type="InterPro" id="IPR045865">
    <property type="entry name" value="ACT-like_dom_sf"/>
</dbReference>
<dbReference type="InterPro" id="IPR041701">
    <property type="entry name" value="MetN_ABC"/>
</dbReference>
<dbReference type="InterPro" id="IPR050086">
    <property type="entry name" value="MetN_ABC_transporter-like"/>
</dbReference>
<dbReference type="InterPro" id="IPR018449">
    <property type="entry name" value="NIL_domain"/>
</dbReference>
<dbReference type="InterPro" id="IPR027417">
    <property type="entry name" value="P-loop_NTPase"/>
</dbReference>
<dbReference type="PANTHER" id="PTHR43166">
    <property type="entry name" value="AMINO ACID IMPORT ATP-BINDING PROTEIN"/>
    <property type="match status" value="1"/>
</dbReference>
<dbReference type="PANTHER" id="PTHR43166:SF30">
    <property type="entry name" value="METHIONINE IMPORT ATP-BINDING PROTEIN METN"/>
    <property type="match status" value="1"/>
</dbReference>
<dbReference type="Pfam" id="PF00005">
    <property type="entry name" value="ABC_tran"/>
    <property type="match status" value="1"/>
</dbReference>
<dbReference type="Pfam" id="PF09383">
    <property type="entry name" value="NIL"/>
    <property type="match status" value="1"/>
</dbReference>
<dbReference type="SMART" id="SM00382">
    <property type="entry name" value="AAA"/>
    <property type="match status" value="1"/>
</dbReference>
<dbReference type="SMART" id="SM00930">
    <property type="entry name" value="NIL"/>
    <property type="match status" value="1"/>
</dbReference>
<dbReference type="SUPFAM" id="SSF55021">
    <property type="entry name" value="ACT-like"/>
    <property type="match status" value="1"/>
</dbReference>
<dbReference type="SUPFAM" id="SSF52540">
    <property type="entry name" value="P-loop containing nucleoside triphosphate hydrolases"/>
    <property type="match status" value="1"/>
</dbReference>
<dbReference type="PROSITE" id="PS00211">
    <property type="entry name" value="ABC_TRANSPORTER_1"/>
    <property type="match status" value="1"/>
</dbReference>
<dbReference type="PROSITE" id="PS50893">
    <property type="entry name" value="ABC_TRANSPORTER_2"/>
    <property type="match status" value="1"/>
</dbReference>
<dbReference type="PROSITE" id="PS51264">
    <property type="entry name" value="METN"/>
    <property type="match status" value="1"/>
</dbReference>
<comment type="function">
    <text evidence="1">Part of the ABC transporter complex MetNIQ involved in methionine import. Responsible for energy coupling to the transport system.</text>
</comment>
<comment type="catalytic activity">
    <reaction evidence="1">
        <text>L-methionine(out) + ATP + H2O = L-methionine(in) + ADP + phosphate + H(+)</text>
        <dbReference type="Rhea" id="RHEA:29779"/>
        <dbReference type="ChEBI" id="CHEBI:15377"/>
        <dbReference type="ChEBI" id="CHEBI:15378"/>
        <dbReference type="ChEBI" id="CHEBI:30616"/>
        <dbReference type="ChEBI" id="CHEBI:43474"/>
        <dbReference type="ChEBI" id="CHEBI:57844"/>
        <dbReference type="ChEBI" id="CHEBI:456216"/>
        <dbReference type="EC" id="7.4.2.11"/>
    </reaction>
</comment>
<comment type="catalytic activity">
    <reaction evidence="1">
        <text>D-methionine(out) + ATP + H2O = D-methionine(in) + ADP + phosphate + H(+)</text>
        <dbReference type="Rhea" id="RHEA:29767"/>
        <dbReference type="ChEBI" id="CHEBI:15377"/>
        <dbReference type="ChEBI" id="CHEBI:15378"/>
        <dbReference type="ChEBI" id="CHEBI:30616"/>
        <dbReference type="ChEBI" id="CHEBI:43474"/>
        <dbReference type="ChEBI" id="CHEBI:57932"/>
        <dbReference type="ChEBI" id="CHEBI:456216"/>
        <dbReference type="EC" id="7.4.2.11"/>
    </reaction>
</comment>
<comment type="subunit">
    <text evidence="1">The complex is composed of two ATP-binding proteins (MetN), two transmembrane proteins (MetI) and a solute-binding protein (MetQ).</text>
</comment>
<comment type="subcellular location">
    <subcellularLocation>
        <location evidence="1">Cell inner membrane</location>
        <topology evidence="1">Peripheral membrane protein</topology>
    </subcellularLocation>
</comment>
<comment type="similarity">
    <text evidence="1">Belongs to the ABC transporter superfamily. Methionine importer (TC 3.A.1.24) family.</text>
</comment>
<accession>Q8Z8R5</accession>
<accession>Q7C8C5</accession>